<sequence>MNNQRKKTGKPSINMLKRVRNRVSTGSQLAKRFSKGLLNGQGPMKLVMAFIAFLRFLAIPPTAGVLARWGTFKKSGAIKVLKGFKKEISNMLSIINKRKKTSLCLMMIMPAALAFHLTSRDGEPRMIVGKNERGKSLLFKTASGINMCTLIAMDLGEMCDDTVTYKCPHITEVEPEDIDCWCNLTSTWVTYGTCNQAGERRRDKRSVALAPHVGMGLDTRTQTWMSAEGAWRQVEKVETWALRHPGFTILALFLAHYIGTSLTQKVVIFILLMLVTPSMTMRCVGVGNRDFVEGLSGATWVDVVLEHGGCVTTMAKNKPTLDIELQKTEATQLATLRKLCIEGKITNITTDSRCPTQGEAVLPEEQDQNYVCKHTYVDRGWGNGCGLFGKGSLVTCAKFQCLEPIEGKVVQYENLKYTVIITVHTGDQHQVGNETQGVTAEITPQASTTEAILPEYGTLGLECSPRTGLDFNEMILLTMKNKAWMVHRQWFFDLPLPWTSGATTETPTWNRKELLVTFKNAHAKKQEVVVLGSQEGAMHTALTGATEIQNSGGTSIFAGHLKCRLKMDKLELKGMSYAMCTNTFVLKKEVSETQHGTILIKVEYKGEDAPCKIPFSTEDGQGKAHNGRLITANPVVTKKEEPVNIEAEPPFGESNIVIGIGDNALKINWYKKGSSIGKMFEATARGARRMAILGDTAWDFGSVGGVLNSLGKMVHQIFGSAYTALFSGVSWVMKIGIGVLLTWIGLNSKNTSMSFSCIAIGIITLYLGAVVQADMGCVINWKGKELKCGSGIFVTNEVHTWTEQYKFQADSPKRLATAIAGAWENGVCGIRSTTRMENLLWKQIANELNYILWENNIKLTVVVGDIIGVLEQGKRTLTPQPMELKYSWKTWGKAKIVTAETQNSSFIIDGPNTPECPSASRAWNVWEVEDYGFGVFTTNIWLKLREVYTQLCDHRLMSAAVKDERAVHADMGYWIESQKNGSWKLEKASLIEVKTCTWPKSHTLWSNGVLESDMIIPKSLAGPISQHNHRPGYHTQTAGPWHLGKLELDFNYCEGTTVVITENCGTRGPSLRTTTVSGKLIHEWCCRSCTLPPLRYMGEDGCWYGMEIRPISEKEENMVKSLVSAGSGKVDNFTMGVLCLAILFEEVMRGKFGKKHMIAGVFFTFVLLLSGQITWRDMAHTLIMIGSNASDRMGMGVTYLALIATFKIQPFLALGFFLRKLTSRENLLLGVGLAMATTLQLPEDIEQMANGIALGLMALKLITQFETYQLWTALISLTCSNTMFTLTVAWRTATLILAGVSLLPVCQSSSMRKTDWLPMAVAAMGVPPLPLFIFSLKDTLKRRSWPLNEGVMAVGLVSILASSLLRNDVPMAGPLVAGGLLIACYVITGTSADLTVEKAADITWEEEAEQTGVSHNLMITVDDDGTMRIKDDETENILTVLLKTALLIVSGVFPYSIPATLLVWHTWQKQTQRSGVLWDVPSPPETQKAELEEGVYRIKQQGIFGKTQVGVGVQKEGVFHTMWHVTRGAVLTYNGKRLEPNWASVKKDLISYGGGWRLSAQWQKGEEVQVIAVEPGKNPKNFQTMPGTFQTTTGEIGAIALDFKPGTSGSPIINREGKVVGLYGNGVVTKNGGYVSGIAQTNAEPDGPTPELEEEMFKKRNLTIMDLHPGSGKTRKYLPAIVREAIKRRLRTLILAPTRVVAAEMEEALKGLPIRYQTTATKSEHTGREIVDLMCHATFTMRLLSPVRVPNYNLIIMDEAHFTDPASIAARGYISTRVGMGEAAAIFMTATPPGTADAFPQSNAPIQDEERDIPERSWNSGNEWITDFAGKTVWFVPSIKAGNDIANCLRKNGKKVIQLSRKTFDTEYQKTKLNDWDFVVTTDISEMGANFKADRVIDPRRCLKPVILTDGPERVILAGPMPVTAASAAQRRGRVGRNPQKENDQYIFTGQPLNNDEDHAHWTEAKMLLDNINTPEGIIPALFEPEREKSAAIDGEYRLKGESRKTFVELMRRGDLPVWLAHKVASEGIKYTDRKWCFDGQRNNQILEENMDVEIWTKEGEKKKLRPRWLDARTYSDPLALKEFKDFAAGRKSIALDLVTEIGRVPSHLAHRTRNALDNLVMLHTSEHGGRAYRHAVEELPETMETLLLLGLMILLTGGAMLFLISGKGIGKTSIGLICVIASSGMLWMAEIPLQWIASAIVLEFFMMVLLIPEPEKQRTPQDNQLAYVVIGILTLAAIIAANEMGLLETTKRDLGMSKEPGVVSPTSYLDVDLHPASAWTLYAVATTVITPMLRHTIENSTANVSLAAIANQAVVLMGLDKGWPISKMDLGVPLLALGCYSQVNPLTLTAAVLLLITHYAIIGPGLQAKATREAQKRTAAGIMKNPTVDGIMTIDLDPVIYDSKFEKQLGQVMLLVLCAVQLLLMRTSWALCEALTLATGPITTLWEGSPGKFWNTTIAVSMANIFRGSYLAGAGLAFSIMKSVGTGKRGTGSQGETLGEKWKKKLNQLSRKEFDLYKKSGITEVDRTEAKEGLKRGEITHHAVSRGSAKLQWFVERNMVIPEGRVIDLGCGRGGWSYYCAGLKKVTEVRGYTKGGPGHEEPVPMSTYGWNIVKLMSGKDVFYLPPEKCDTLLCDIGESSPSPTVEESRTIRVLKMVEPWLKNNQFCIKVLNPYMPTVIEHLERLQRKHGGMLVRNPLSRNSTHEMYWISNGTGNIVASVNMVSRLLLNRFTMTHRRPTIEKDVDLGAGTRHVNAEPETPNMDVIGERIKRIKEEHNSTWHYDDENPYKTWAYHGSYEVKATGSASSMINGVVKLLTKPWDVVPMVTQMAMTDTTPFGQQRVFKEKVDTRTPRSMPGTRRVMGITAEWLWRTLGRNKKPRLCTREEFTKKVRTNAAMGAVFTEENQWDSAKAAVEDEDFWKLVDRERELHKLGKCGSCVYNMMGKREKKLGEFGKAKGSRAIWYMWLGARYLEFEALGFLNEDHWFSRENSYSGVEGEGLHKLGYILRDISKIPGGAMYADDTAGWDTRITEDDLHNEEKITQQMDPEHRQLANAIFKLTYQNKVVKVQRPTPTGTVMDIISRKDQRGSGQVGTYGLNTFTNMEAQLIRQMEGEGVLSKADLENPHLPEKKITQWLETKGVERLKRMAISGDDCVVKPIDDRFANALLALNDMGKVRKDIPQWQPSKGWHDWQQVPFCSHHFHELIMKDGRKLVVPCRPQDELIGRARISQGAGWSLRETACLGKAYAQMWSLMYFHRRDLRLASNAICSAVPVHWVPTSRTTWSIHAHHQWMTTEDMLTVWNRVWIEDNPWMEDKTPVTTWENVPYLGKREDQWCGSLIGLTSRATWAQNIPTAIQQVRSLIGNEEFLDYMPSMKRFRKEEESEGAIW</sequence>
<organism>
    <name type="scientific">Dengue virus type 3 (strain Martinique/1243/1999)</name>
    <name type="common">DENV-3</name>
    <dbReference type="NCBI Taxonomy" id="408691"/>
    <lineage>
        <taxon>Viruses</taxon>
        <taxon>Riboviria</taxon>
        <taxon>Orthornavirae</taxon>
        <taxon>Kitrinoviricota</taxon>
        <taxon>Flasuviricetes</taxon>
        <taxon>Amarillovirales</taxon>
        <taxon>Flaviviridae</taxon>
        <taxon>Orthoflavivirus</taxon>
        <taxon>Orthoflavivirus denguei</taxon>
        <taxon>Dengue virus</taxon>
    </lineage>
</organism>
<reference key="1">
    <citation type="journal article" date="2003" name="J. Clin. Microbiol.">
        <title>Genetic characterization of newly reintroduced dengue virus type 3 in Martinique (French West Indies).</title>
        <authorList>
            <person name="Peyrefitte C.N."/>
            <person name="Couissinier-Paris P."/>
            <person name="Mercier-Perennec V."/>
            <person name="Bessaud M."/>
            <person name="Martial J."/>
            <person name="Kenane N."/>
            <person name="Durand J.-P.A."/>
            <person name="Tolou H.J."/>
        </authorList>
    </citation>
    <scope>NUCLEOTIDE SEQUENCE [GENOMIC RNA]</scope>
</reference>
<evidence type="ECO:0000250" key="1">
    <source>
        <dbReference type="UniProtKB" id="P03314"/>
    </source>
</evidence>
<evidence type="ECO:0000250" key="2">
    <source>
        <dbReference type="UniProtKB" id="P14335"/>
    </source>
</evidence>
<evidence type="ECO:0000250" key="3">
    <source>
        <dbReference type="UniProtKB" id="P14336"/>
    </source>
</evidence>
<evidence type="ECO:0000250" key="4">
    <source>
        <dbReference type="UniProtKB" id="P14340"/>
    </source>
</evidence>
<evidence type="ECO:0000250" key="5">
    <source>
        <dbReference type="UniProtKB" id="P17763"/>
    </source>
</evidence>
<evidence type="ECO:0000250" key="6">
    <source>
        <dbReference type="UniProtKB" id="P29990"/>
    </source>
</evidence>
<evidence type="ECO:0000250" key="7">
    <source>
        <dbReference type="UniProtKB" id="P29991"/>
    </source>
</evidence>
<evidence type="ECO:0000250" key="8">
    <source>
        <dbReference type="UniProtKB" id="Q32ZE1"/>
    </source>
</evidence>
<evidence type="ECO:0000250" key="9">
    <source>
        <dbReference type="UniProtKB" id="Q6YMS4"/>
    </source>
</evidence>
<evidence type="ECO:0000250" key="10">
    <source>
        <dbReference type="UniProtKB" id="Q9Q6P4"/>
    </source>
</evidence>
<evidence type="ECO:0000255" key="11"/>
<evidence type="ECO:0000255" key="12">
    <source>
        <dbReference type="PROSITE-ProRule" id="PRU00498"/>
    </source>
</evidence>
<evidence type="ECO:0000255" key="13">
    <source>
        <dbReference type="PROSITE-ProRule" id="PRU00539"/>
    </source>
</evidence>
<evidence type="ECO:0000255" key="14">
    <source>
        <dbReference type="PROSITE-ProRule" id="PRU00541"/>
    </source>
</evidence>
<evidence type="ECO:0000255" key="15">
    <source>
        <dbReference type="PROSITE-ProRule" id="PRU00542"/>
    </source>
</evidence>
<evidence type="ECO:0000255" key="16">
    <source>
        <dbReference type="PROSITE-ProRule" id="PRU00859"/>
    </source>
</evidence>
<evidence type="ECO:0000255" key="17">
    <source>
        <dbReference type="PROSITE-ProRule" id="PRU00860"/>
    </source>
</evidence>
<evidence type="ECO:0000255" key="18">
    <source>
        <dbReference type="PROSITE-ProRule" id="PRU00924"/>
    </source>
</evidence>
<organismHost>
    <name type="scientific">Aedimorphus</name>
    <dbReference type="NCBI Taxonomy" id="53540"/>
</organismHost>
<organismHost>
    <name type="scientific">Diceromyia</name>
    <dbReference type="NCBI Taxonomy" id="53539"/>
</organismHost>
<organismHost>
    <name type="scientific">Erythrocebus patas</name>
    <name type="common">Red guenon</name>
    <name type="synonym">Cercopithecus patas</name>
    <dbReference type="NCBI Taxonomy" id="9538"/>
</organismHost>
<organismHost>
    <name type="scientific">Homo sapiens</name>
    <name type="common">Human</name>
    <dbReference type="NCBI Taxonomy" id="9606"/>
</organismHost>
<organismHost>
    <name type="scientific">Stegomyia</name>
    <dbReference type="NCBI Taxonomy" id="53541"/>
</organismHost>
<name>POLG_DEN3M</name>
<proteinExistence type="inferred from homology"/>
<keyword id="KW-0007">Acetylation</keyword>
<keyword id="KW-1072">Activation of host autophagy by virus</keyword>
<keyword id="KW-0067">ATP-binding</keyword>
<keyword id="KW-0167">Capsid protein</keyword>
<keyword id="KW-1165">Clathrin-mediated endocytosis of virus by host</keyword>
<keyword id="KW-0165">Cleavage on pair of basic residues</keyword>
<keyword id="KW-1015">Disulfide bond</keyword>
<keyword id="KW-1170">Fusion of virus membrane with host endosomal membrane</keyword>
<keyword id="KW-1168">Fusion of virus membrane with host membrane</keyword>
<keyword id="KW-0325">Glycoprotein</keyword>
<keyword id="KW-0347">Helicase</keyword>
<keyword id="KW-1035">Host cytoplasm</keyword>
<keyword id="KW-1038">Host endoplasmic reticulum</keyword>
<keyword id="KW-1043">Host membrane</keyword>
<keyword id="KW-1045">Host mitochondrion</keyword>
<keyword id="KW-1048">Host nucleus</keyword>
<keyword id="KW-0945">Host-virus interaction</keyword>
<keyword id="KW-0378">Hydrolase</keyword>
<keyword id="KW-1090">Inhibition of host innate immune response by virus</keyword>
<keyword id="KW-1114">Inhibition of host interferon signaling pathway by virus</keyword>
<keyword id="KW-1097">Inhibition of host MAVS by virus</keyword>
<keyword id="KW-1113">Inhibition of host RLR pathway by virus</keyword>
<keyword id="KW-1106">Inhibition of host STAT2 by virus</keyword>
<keyword id="KW-1112">Inhibition of host TYK2 by virus</keyword>
<keyword id="KW-0922">Interferon antiviral system evasion</keyword>
<keyword id="KW-0407">Ion channel</keyword>
<keyword id="KW-0406">Ion transport</keyword>
<keyword id="KW-0472">Membrane</keyword>
<keyword id="KW-0479">Metal-binding</keyword>
<keyword id="KW-0489">Methyltransferase</keyword>
<keyword id="KW-0506">mRNA capping</keyword>
<keyword id="KW-0507">mRNA processing</keyword>
<keyword id="KW-0511">Multifunctional enzyme</keyword>
<keyword id="KW-0547">Nucleotide-binding</keyword>
<keyword id="KW-0548">Nucleotidyltransferase</keyword>
<keyword id="KW-0597">Phosphoprotein</keyword>
<keyword id="KW-0645">Protease</keyword>
<keyword id="KW-0694">RNA-binding</keyword>
<keyword id="KW-0696">RNA-directed RNA polymerase</keyword>
<keyword id="KW-0949">S-adenosyl-L-methionine</keyword>
<keyword id="KW-0964">Secreted</keyword>
<keyword id="KW-0720">Serine protease</keyword>
<keyword id="KW-0941">Suppressor of RNA silencing</keyword>
<keyword id="KW-0804">Transcription</keyword>
<keyword id="KW-0805">Transcription regulation</keyword>
<keyword id="KW-0808">Transferase</keyword>
<keyword id="KW-0812">Transmembrane</keyword>
<keyword id="KW-1133">Transmembrane helix</keyword>
<keyword id="KW-0813">Transport</keyword>
<keyword id="KW-0832">Ubl conjugation</keyword>
<keyword id="KW-1161">Viral attachment to host cell</keyword>
<keyword id="KW-0261">Viral envelope protein</keyword>
<keyword id="KW-0899">Viral immunoevasion</keyword>
<keyword id="KW-1182">Viral ion channel</keyword>
<keyword id="KW-1162">Viral penetration into host cytoplasm</keyword>
<keyword id="KW-0693">Viral RNA replication</keyword>
<keyword id="KW-0946">Virion</keyword>
<keyword id="KW-1164">Virus endocytosis by host</keyword>
<keyword id="KW-1160">Virus entry into host cell</keyword>
<keyword id="KW-0862">Zinc</keyword>
<accession>Q6YMS3</accession>
<protein>
    <recommendedName>
        <fullName>Genome polyprotein</fullName>
    </recommendedName>
    <component>
        <recommendedName>
            <fullName>Capsid protein C</fullName>
        </recommendedName>
        <alternativeName>
            <fullName>Core protein</fullName>
        </alternativeName>
    </component>
    <component>
        <recommendedName>
            <fullName>Protein prM</fullName>
        </recommendedName>
    </component>
    <component>
        <recommendedName>
            <fullName>Peptide pr</fullName>
        </recommendedName>
    </component>
    <component>
        <recommendedName>
            <fullName>Small envelope protein M</fullName>
        </recommendedName>
        <alternativeName>
            <fullName>Matrix protein</fullName>
        </alternativeName>
    </component>
    <component>
        <recommendedName>
            <fullName>Envelope protein E</fullName>
        </recommendedName>
    </component>
    <component>
        <recommendedName>
            <fullName>Non-structural protein 1</fullName>
            <shortName>NS1</shortName>
        </recommendedName>
    </component>
    <component>
        <recommendedName>
            <fullName>Non-structural protein 2A</fullName>
            <shortName>NS2A</shortName>
        </recommendedName>
    </component>
    <component>
        <recommendedName>
            <fullName>Serine protease subunit NS2B</fullName>
        </recommendedName>
        <alternativeName>
            <fullName>Flavivirin protease NS2B regulatory subunit</fullName>
        </alternativeName>
        <alternativeName>
            <fullName>Non-structural protein 2B</fullName>
        </alternativeName>
    </component>
    <component>
        <recommendedName>
            <fullName>Serine protease NS3</fullName>
            <ecNumber>3.4.21.91</ecNumber>
            <ecNumber evidence="10">3.6.1.15</ecNumber>
            <ecNumber evidence="10">3.6.4.13</ecNumber>
        </recommendedName>
        <alternativeName>
            <fullName>Flavivirin protease NS3 catalytic subunit</fullName>
        </alternativeName>
        <alternativeName>
            <fullName>Non-structural protein 3</fullName>
        </alternativeName>
    </component>
    <component>
        <recommendedName>
            <fullName>Non-structural protein 4A</fullName>
            <shortName>NS4A</shortName>
        </recommendedName>
    </component>
    <component>
        <recommendedName>
            <fullName>Peptide 2k</fullName>
        </recommendedName>
    </component>
    <component>
        <recommendedName>
            <fullName>Non-structural protein 4B</fullName>
            <shortName>NS4B</shortName>
        </recommendedName>
    </component>
    <component>
        <recommendedName>
            <fullName>RNA-directed RNA polymerase NS5</fullName>
            <ecNumber evidence="18">2.1.1.56</ecNumber>
            <ecNumber evidence="18">2.1.1.57</ecNumber>
            <ecNumber evidence="13">2.7.7.48</ecNumber>
        </recommendedName>
        <alternativeName>
            <fullName>Non-structural protein 5</fullName>
        </alternativeName>
    </component>
</protein>
<feature type="chain" id="PRO_0000405224" description="Genome polyprotein">
    <location>
        <begin position="1"/>
        <end position="3390"/>
    </location>
</feature>
<feature type="chain" id="PRO_0000268073" description="Capsid protein C" evidence="6">
    <location>
        <begin position="1"/>
        <end position="100"/>
    </location>
</feature>
<feature type="propeptide" id="PRO_0000268074" description="ER anchor for the capsid protein C, removed in mature form by serine protease NS3" evidence="6">
    <location>
        <begin position="101"/>
        <end position="114"/>
    </location>
</feature>
<feature type="chain" id="PRO_0000268075" description="Protein prM" evidence="6">
    <location>
        <begin position="115"/>
        <end position="280"/>
    </location>
</feature>
<feature type="chain" id="PRO_0000268076" description="Peptide pr" evidence="6">
    <location>
        <begin position="115"/>
        <end position="205"/>
    </location>
</feature>
<feature type="chain" id="PRO_0000268077" description="Small envelope protein M" evidence="6">
    <location>
        <begin position="206"/>
        <end position="280"/>
    </location>
</feature>
<feature type="chain" id="PRO_0000268078" description="Envelope protein E" evidence="6">
    <location>
        <begin position="281"/>
        <end position="773"/>
    </location>
</feature>
<feature type="chain" id="PRO_0000268079" description="Non-structural protein 1" evidence="6">
    <location>
        <begin position="774"/>
        <end position="1125"/>
    </location>
</feature>
<feature type="chain" id="PRO_0000268080" description="Non-structural protein 2A" evidence="6">
    <location>
        <begin position="1126"/>
        <end position="1343"/>
    </location>
</feature>
<feature type="chain" id="PRO_0000268082" description="Serine protease subunit NS2B" evidence="6">
    <location>
        <begin position="1344"/>
        <end position="1473"/>
    </location>
</feature>
<feature type="chain" id="PRO_0000268083" description="Serine protease NS3">
    <location>
        <begin position="1474"/>
        <end position="2092"/>
    </location>
</feature>
<feature type="chain" id="PRO_0000268084" description="Non-structural protein 4A" evidence="6">
    <location>
        <begin position="2093"/>
        <end position="2219"/>
    </location>
</feature>
<feature type="peptide" id="PRO_0000268085" description="Peptide 2k" evidence="6">
    <location>
        <begin position="2220"/>
        <end position="2242"/>
    </location>
</feature>
<feature type="chain" id="PRO_0000268086" description="Non-structural protein 4B" evidence="6">
    <location>
        <begin position="2243"/>
        <end position="2490"/>
    </location>
</feature>
<feature type="chain" id="PRO_0000268087" description="RNA-directed RNA polymerase NS5" evidence="6">
    <location>
        <begin position="2491"/>
        <end position="3390"/>
    </location>
</feature>
<feature type="topological domain" description="Cytoplasmic" evidence="11">
    <location>
        <begin position="1"/>
        <end position="100"/>
    </location>
</feature>
<feature type="transmembrane region" description="Helical" evidence="11">
    <location>
        <begin position="101"/>
        <end position="120"/>
    </location>
</feature>
<feature type="topological domain" description="Extracellular" evidence="11">
    <location>
        <begin position="121"/>
        <end position="243"/>
    </location>
</feature>
<feature type="transmembrane region" description="Helical" evidence="11">
    <location>
        <begin position="244"/>
        <end position="264"/>
    </location>
</feature>
<feature type="topological domain" description="Cytoplasmic" evidence="11">
    <location>
        <position position="265"/>
    </location>
</feature>
<feature type="transmembrane region" description="Helical" evidence="11">
    <location>
        <begin position="266"/>
        <end position="280"/>
    </location>
</feature>
<feature type="topological domain" description="Extracellular" evidence="11">
    <location>
        <begin position="281"/>
        <end position="723"/>
    </location>
</feature>
<feature type="transmembrane region" description="Helical" evidence="11">
    <location>
        <begin position="724"/>
        <end position="744"/>
    </location>
</feature>
<feature type="topological domain" description="Cytoplasmic" evidence="11">
    <location>
        <begin position="745"/>
        <end position="750"/>
    </location>
</feature>
<feature type="transmembrane region" description="Helical" evidence="11">
    <location>
        <begin position="751"/>
        <end position="771"/>
    </location>
</feature>
<feature type="topological domain" description="Extracellular" evidence="11">
    <location>
        <begin position="772"/>
        <end position="1193"/>
    </location>
</feature>
<feature type="transmembrane region" description="Helical" evidence="11">
    <location>
        <begin position="1194"/>
        <end position="1218"/>
    </location>
</feature>
<feature type="topological domain" description="Cytoplasmic" evidence="11">
    <location>
        <begin position="1219"/>
        <end position="1224"/>
    </location>
</feature>
<feature type="transmembrane region" description="Helical" evidence="11">
    <location>
        <begin position="1225"/>
        <end position="1243"/>
    </location>
</feature>
<feature type="topological domain" description="Lumenal" evidence="11">
    <location>
        <begin position="1244"/>
        <end position="1267"/>
    </location>
</feature>
<feature type="transmembrane region" description="Helical" evidence="11">
    <location>
        <begin position="1268"/>
        <end position="1288"/>
    </location>
</feature>
<feature type="topological domain" description="Cytoplasmic" evidence="11">
    <location>
        <position position="1289"/>
    </location>
</feature>
<feature type="transmembrane region" description="Helical" evidence="11">
    <location>
        <begin position="1290"/>
        <end position="1308"/>
    </location>
</feature>
<feature type="topological domain" description="Lumenal" evidence="11">
    <location>
        <begin position="1309"/>
        <end position="1315"/>
    </location>
</feature>
<feature type="transmembrane region" description="Helical" evidence="11">
    <location>
        <begin position="1316"/>
        <end position="1336"/>
    </location>
</feature>
<feature type="topological domain" description="Cytoplasmic" evidence="11">
    <location>
        <begin position="1337"/>
        <end position="1344"/>
    </location>
</feature>
<feature type="transmembrane region" description="Helical" evidence="11">
    <location>
        <begin position="1345"/>
        <end position="1365"/>
    </location>
</feature>
<feature type="topological domain" description="Lumenal" evidence="11">
    <location>
        <begin position="1366"/>
        <end position="1368"/>
    </location>
</feature>
<feature type="transmembrane region" description="Helical" evidence="11">
    <location>
        <begin position="1369"/>
        <end position="1389"/>
    </location>
</feature>
<feature type="topological domain" description="Cytoplasmic" evidence="11">
    <location>
        <begin position="1390"/>
        <end position="1443"/>
    </location>
</feature>
<feature type="intramembrane region" description="Helical" evidence="11">
    <location>
        <begin position="1444"/>
        <end position="1464"/>
    </location>
</feature>
<feature type="topological domain" description="Cytoplasmic" evidence="11">
    <location>
        <begin position="1465"/>
        <end position="2146"/>
    </location>
</feature>
<feature type="transmembrane region" description="Helical" evidence="11">
    <location>
        <begin position="2147"/>
        <end position="2167"/>
    </location>
</feature>
<feature type="topological domain" description="Lumenal" evidence="11">
    <location>
        <begin position="2168"/>
        <end position="2169"/>
    </location>
</feature>
<feature type="intramembrane region" description="Helical" evidence="11">
    <location>
        <begin position="2170"/>
        <end position="2190"/>
    </location>
</feature>
<feature type="topological domain" description="Lumenal" evidence="11">
    <location>
        <position position="2191"/>
    </location>
</feature>
<feature type="transmembrane region" description="Helical" evidence="11">
    <location>
        <begin position="2192"/>
        <end position="2212"/>
    </location>
</feature>
<feature type="topological domain" description="Cytoplasmic" evidence="11">
    <location>
        <begin position="2213"/>
        <end position="2227"/>
    </location>
</feature>
<feature type="transmembrane region" description="Helical; Note=Signal for NS4B" evidence="11">
    <location>
        <begin position="2228"/>
        <end position="2248"/>
    </location>
</feature>
<feature type="topological domain" description="Lumenal" evidence="11">
    <location>
        <begin position="2249"/>
        <end position="2273"/>
    </location>
</feature>
<feature type="intramembrane region" description="Helical" evidence="11">
    <location>
        <begin position="2274"/>
        <end position="2294"/>
    </location>
</feature>
<feature type="topological domain" description="Lumenal" evidence="11">
    <location>
        <begin position="2295"/>
        <end position="2305"/>
    </location>
</feature>
<feature type="intramembrane region" description="Helical" evidence="11">
    <location>
        <begin position="2306"/>
        <end position="2326"/>
    </location>
</feature>
<feature type="topological domain" description="Lumenal" evidence="11">
    <location>
        <begin position="2327"/>
        <end position="2346"/>
    </location>
</feature>
<feature type="transmembrane region" description="Helical" evidence="11">
    <location>
        <begin position="2347"/>
        <end position="2367"/>
    </location>
</feature>
<feature type="topological domain" description="Cytoplasmic" evidence="11">
    <location>
        <begin position="2368"/>
        <end position="2412"/>
    </location>
</feature>
<feature type="transmembrane region" description="Helical" evidence="11">
    <location>
        <begin position="2413"/>
        <end position="2433"/>
    </location>
</feature>
<feature type="topological domain" description="Lumenal" evidence="11">
    <location>
        <begin position="2434"/>
        <end position="2458"/>
    </location>
</feature>
<feature type="transmembrane region" description="Helical" evidence="11">
    <location>
        <begin position="2459"/>
        <end position="2479"/>
    </location>
</feature>
<feature type="topological domain" description="Cytoplasmic" evidence="11">
    <location>
        <begin position="2480"/>
        <end position="3390"/>
    </location>
</feature>
<feature type="domain" description="Peptidase S7" evidence="17">
    <location>
        <begin position="1474"/>
        <end position="1651"/>
    </location>
</feature>
<feature type="domain" description="Helicase ATP-binding" evidence="14">
    <location>
        <begin position="1654"/>
        <end position="1810"/>
    </location>
</feature>
<feature type="domain" description="Helicase C-terminal" evidence="15">
    <location>
        <begin position="1820"/>
        <end position="1986"/>
    </location>
</feature>
<feature type="domain" description="mRNA cap 0-1 NS5-type MT" evidence="18">
    <location>
        <begin position="2492"/>
        <end position="2753"/>
    </location>
</feature>
<feature type="domain" description="RdRp catalytic" evidence="13">
    <location>
        <begin position="3018"/>
        <end position="3168"/>
    </location>
</feature>
<feature type="region of interest" description="Interaction with host EXOC1" evidence="5">
    <location>
        <begin position="1"/>
        <end position="15"/>
    </location>
</feature>
<feature type="region of interest" description="Hydrophobic; homodimerization of capsid protein C" evidence="6">
    <location>
        <begin position="37"/>
        <end position="72"/>
    </location>
</feature>
<feature type="region of interest" description="Fusion peptide" evidence="3">
    <location>
        <begin position="378"/>
        <end position="391"/>
    </location>
</feature>
<feature type="region of interest" description="Interacts with and activates NS3 protease" evidence="16">
    <location>
        <begin position="1396"/>
        <end position="1435"/>
    </location>
</feature>
<feature type="region of interest" description="Important for RNA-binding" evidence="4">
    <location>
        <begin position="1658"/>
        <end position="1661"/>
    </location>
</feature>
<feature type="short sequence motif" description="DEAH box" evidence="14">
    <location>
        <begin position="1758"/>
        <end position="1761"/>
    </location>
</feature>
<feature type="short sequence motif" description="SUMO-interacting motif" evidence="6">
    <location>
        <begin position="2567"/>
        <end position="2570"/>
    </location>
</feature>
<feature type="active site" description="Charge relay system; for serine protease NS3 activity" evidence="17">
    <location>
        <position position="1524"/>
    </location>
</feature>
<feature type="active site" description="Charge relay system; for serine protease NS3 activity" evidence="17">
    <location>
        <position position="1548"/>
    </location>
</feature>
<feature type="active site" description="Charge relay system; for serine protease NS3 activity" evidence="17">
    <location>
        <position position="1608"/>
    </location>
</feature>
<feature type="active site" description="For 2'-O-MTase activity" evidence="9">
    <location>
        <position position="2551"/>
    </location>
</feature>
<feature type="active site" description="For 2'-O-MTase activity" evidence="9">
    <location>
        <position position="2636"/>
    </location>
</feature>
<feature type="active site" description="For 2'-O-MTase activity" evidence="9">
    <location>
        <position position="2670"/>
    </location>
</feature>
<feature type="active site" description="For 2'-O-MTase activity" evidence="9">
    <location>
        <position position="2706"/>
    </location>
</feature>
<feature type="binding site" evidence="14">
    <location>
        <begin position="1667"/>
        <end position="1674"/>
    </location>
    <ligand>
        <name>ATP</name>
        <dbReference type="ChEBI" id="CHEBI:30616"/>
    </ligand>
</feature>
<feature type="binding site" evidence="18">
    <location>
        <position position="2546"/>
    </location>
    <ligand>
        <name>S-adenosyl-L-methionine</name>
        <dbReference type="ChEBI" id="CHEBI:59789"/>
    </ligand>
</feature>
<feature type="binding site" evidence="18">
    <location>
        <position position="2576"/>
    </location>
    <ligand>
        <name>S-adenosyl-L-methionine</name>
        <dbReference type="ChEBI" id="CHEBI:59789"/>
    </ligand>
</feature>
<feature type="binding site" evidence="18">
    <location>
        <position position="2577"/>
    </location>
    <ligand>
        <name>S-adenosyl-L-methionine</name>
        <dbReference type="ChEBI" id="CHEBI:59789"/>
    </ligand>
</feature>
<feature type="binding site" evidence="18">
    <location>
        <position position="2594"/>
    </location>
    <ligand>
        <name>S-adenosyl-L-methionine</name>
        <dbReference type="ChEBI" id="CHEBI:59789"/>
    </ligand>
</feature>
<feature type="binding site" evidence="18">
    <location>
        <position position="2595"/>
    </location>
    <ligand>
        <name>S-adenosyl-L-methionine</name>
        <dbReference type="ChEBI" id="CHEBI:59789"/>
    </ligand>
</feature>
<feature type="binding site" evidence="18">
    <location>
        <position position="2621"/>
    </location>
    <ligand>
        <name>S-adenosyl-L-methionine</name>
        <dbReference type="ChEBI" id="CHEBI:59789"/>
    </ligand>
</feature>
<feature type="binding site" evidence="18">
    <location>
        <position position="2622"/>
    </location>
    <ligand>
        <name>S-adenosyl-L-methionine</name>
        <dbReference type="ChEBI" id="CHEBI:59789"/>
    </ligand>
</feature>
<feature type="binding site" evidence="18">
    <location>
        <position position="2637"/>
    </location>
    <ligand>
        <name>S-adenosyl-L-methionine</name>
        <dbReference type="ChEBI" id="CHEBI:59789"/>
    </ligand>
</feature>
<feature type="binding site" evidence="18">
    <location>
        <position position="2708"/>
    </location>
    <ligand>
        <name>S-adenosyl-L-methionine</name>
        <dbReference type="ChEBI" id="CHEBI:59789"/>
    </ligand>
</feature>
<feature type="binding site" evidence="9">
    <location>
        <position position="2927"/>
    </location>
    <ligand>
        <name>Zn(2+)</name>
        <dbReference type="ChEBI" id="CHEBI:29105"/>
        <label>1</label>
    </ligand>
</feature>
<feature type="binding site" evidence="9">
    <location>
        <position position="2931"/>
    </location>
    <ligand>
        <name>Zn(2+)</name>
        <dbReference type="ChEBI" id="CHEBI:29105"/>
        <label>1</label>
    </ligand>
</feature>
<feature type="binding site" evidence="9">
    <location>
        <position position="2936"/>
    </location>
    <ligand>
        <name>Zn(2+)</name>
        <dbReference type="ChEBI" id="CHEBI:29105"/>
        <label>1</label>
    </ligand>
</feature>
<feature type="binding site" evidence="9">
    <location>
        <position position="2939"/>
    </location>
    <ligand>
        <name>Zn(2+)</name>
        <dbReference type="ChEBI" id="CHEBI:29105"/>
        <label>1</label>
    </ligand>
</feature>
<feature type="binding site" evidence="9">
    <location>
        <position position="3202"/>
    </location>
    <ligand>
        <name>Zn(2+)</name>
        <dbReference type="ChEBI" id="CHEBI:29105"/>
        <label>2</label>
    </ligand>
</feature>
<feature type="binding site" evidence="9">
    <location>
        <position position="3218"/>
    </location>
    <ligand>
        <name>Zn(2+)</name>
        <dbReference type="ChEBI" id="CHEBI:29105"/>
        <label>2</label>
    </ligand>
</feature>
<feature type="binding site" evidence="9">
    <location>
        <position position="3337"/>
    </location>
    <ligand>
        <name>Zn(2+)</name>
        <dbReference type="ChEBI" id="CHEBI:29105"/>
        <label>2</label>
    </ligand>
</feature>
<feature type="site" description="Cleavage; by viral protease NS3" evidence="6">
    <location>
        <begin position="100"/>
        <end position="101"/>
    </location>
</feature>
<feature type="site" description="Cleavage; by host signal peptidase" evidence="6">
    <location>
        <begin position="114"/>
        <end position="115"/>
    </location>
</feature>
<feature type="site" description="Cleavage; by host furin" evidence="6 11">
    <location>
        <begin position="205"/>
        <end position="206"/>
    </location>
</feature>
<feature type="site" description="Cleavage; by host signal peptidase" evidence="6">
    <location>
        <begin position="280"/>
        <end position="281"/>
    </location>
</feature>
<feature type="site" description="Cleavage; by host signal peptidase" evidence="6">
    <location>
        <begin position="773"/>
        <end position="774"/>
    </location>
</feature>
<feature type="site" description="Cleavage; by host" evidence="6">
    <location>
        <begin position="1125"/>
        <end position="1126"/>
    </location>
</feature>
<feature type="site" description="Cleavage; by viral protease NS3" evidence="6">
    <location>
        <begin position="1343"/>
        <end position="1344"/>
    </location>
</feature>
<feature type="site" description="Cleavage; by autolysis" evidence="6">
    <location>
        <begin position="1473"/>
        <end position="1474"/>
    </location>
</feature>
<feature type="site" description="Involved in NS3 ATPase and RTPase activities" evidence="2">
    <location>
        <position position="1931"/>
    </location>
</feature>
<feature type="site" description="Involved in NS3 ATPase and RTPase activities" evidence="2">
    <location>
        <position position="1934"/>
    </location>
</feature>
<feature type="site" description="Cleavage; by autolysis" evidence="6">
    <location>
        <begin position="2092"/>
        <end position="2093"/>
    </location>
</feature>
<feature type="site" description="Cleavage; by viral protease NS3" evidence="6">
    <location>
        <begin position="2219"/>
        <end position="2220"/>
    </location>
</feature>
<feature type="site" description="Cleavage; by host signal peptidase" evidence="6">
    <location>
        <begin position="2242"/>
        <end position="2243"/>
    </location>
</feature>
<feature type="site" description="Cleavage; by viral protease NS3" evidence="6">
    <location>
        <begin position="2490"/>
        <end position="2491"/>
    </location>
</feature>
<feature type="site" description="mRNA cap binding" evidence="18">
    <location>
        <position position="2504"/>
    </location>
</feature>
<feature type="site" description="mRNA cap binding; via carbonyl oxygen" evidence="18">
    <location>
        <position position="2507"/>
    </location>
</feature>
<feature type="site" description="mRNA cap binding" evidence="18">
    <location>
        <position position="2508"/>
    </location>
</feature>
<feature type="site" description="mRNA cap binding; via carbonyl oxygen" evidence="18">
    <location>
        <position position="2510"/>
    </location>
</feature>
<feature type="site" description="mRNA cap binding" evidence="18">
    <location>
        <position position="2515"/>
    </location>
</feature>
<feature type="site" description="mRNA cap binding" evidence="18">
    <location>
        <position position="2519"/>
    </location>
</feature>
<feature type="site" description="Essential for 2'-O-methyltransferase activity" evidence="18">
    <location>
        <position position="2551"/>
    </location>
</feature>
<feature type="site" description="Essential for 2'-O-methyltransferase and N-7 methyltransferase activity" evidence="18">
    <location>
        <position position="2636"/>
    </location>
</feature>
<feature type="site" description="mRNA cap binding" evidence="18">
    <location>
        <position position="2640"/>
    </location>
</feature>
<feature type="site" description="Essential for 2'-O-methyltransferase activity" evidence="18">
    <location>
        <position position="2670"/>
    </location>
</feature>
<feature type="site" description="mRNA cap binding" evidence="18">
    <location>
        <position position="2701"/>
    </location>
</feature>
<feature type="site" description="mRNA cap binding" evidence="18">
    <location>
        <position position="2703"/>
    </location>
</feature>
<feature type="site" description="Essential for 2'-O-methyltransferase activity" evidence="18">
    <location>
        <position position="2706"/>
    </location>
</feature>
<feature type="modified residue" description="N6-acetyllysine; by host" evidence="8">
    <location>
        <position position="1862"/>
    </location>
</feature>
<feature type="modified residue" description="Phosphoserine" evidence="1">
    <location>
        <position position="2546"/>
    </location>
</feature>
<feature type="glycosylation site" description="N-linked (GlcNAc...) asparagine; by host" evidence="12">
    <location>
        <position position="183"/>
    </location>
</feature>
<feature type="glycosylation site" description="N-linked (GlcNAc...) asparagine; by host" evidence="12">
    <location>
        <position position="347"/>
    </location>
</feature>
<feature type="glycosylation site" description="N-linked (GlcNAc...) asparagine; by host" evidence="12">
    <location>
        <position position="433"/>
    </location>
</feature>
<feature type="glycosylation site" description="N-linked (GlcNAc...) asparagine; by host" evidence="12">
    <location>
        <position position="903"/>
    </location>
</feature>
<feature type="glycosylation site" description="N-linked (GlcNAc...) asparagine; by host" evidence="12">
    <location>
        <position position="980"/>
    </location>
</feature>
<feature type="glycosylation site" description="N-linked (GlcNAc...) asparagine; by host" evidence="12">
    <location>
        <position position="1132"/>
    </location>
</feature>
<feature type="glycosylation site" description="N-linked (GlcNAc...) asparagine; by host" evidence="12">
    <location>
        <position position="1188"/>
    </location>
</feature>
<feature type="glycosylation site" description="N-linked (GlcNAc...) asparagine; by host" evidence="12">
    <location>
        <position position="2300"/>
    </location>
</feature>
<feature type="glycosylation site" description="N-linked (GlcNAc...) asparagine; by host" evidence="12">
    <location>
        <position position="2304"/>
    </location>
</feature>
<feature type="glycosylation site" description="N-linked (GlcNAc...) asparagine; by host" evidence="12">
    <location>
        <position position="2456"/>
    </location>
</feature>
<feature type="disulfide bond" evidence="5">
    <location>
        <begin position="283"/>
        <end position="310"/>
    </location>
</feature>
<feature type="disulfide bond" evidence="5">
    <location>
        <begin position="340"/>
        <end position="401"/>
    </location>
</feature>
<feature type="disulfide bond" evidence="5">
    <location>
        <begin position="354"/>
        <end position="385"/>
    </location>
</feature>
<feature type="disulfide bond" evidence="5">
    <location>
        <begin position="372"/>
        <end position="396"/>
    </location>
</feature>
<feature type="disulfide bond" evidence="5">
    <location>
        <begin position="463"/>
        <end position="563"/>
    </location>
</feature>
<feature type="disulfide bond" evidence="5">
    <location>
        <begin position="580"/>
        <end position="611"/>
    </location>
</feature>
<feature type="disulfide bond" evidence="5">
    <location>
        <begin position="777"/>
        <end position="788"/>
    </location>
</feature>
<feature type="disulfide bond" evidence="5">
    <location>
        <begin position="828"/>
        <end position="916"/>
    </location>
</feature>
<feature type="disulfide bond" evidence="5">
    <location>
        <begin position="952"/>
        <end position="996"/>
    </location>
</feature>
<feature type="disulfide bond" evidence="5">
    <location>
        <begin position="1053"/>
        <end position="1102"/>
    </location>
</feature>
<feature type="disulfide bond" evidence="5">
    <location>
        <begin position="1064"/>
        <end position="1086"/>
    </location>
</feature>
<feature type="disulfide bond" evidence="5">
    <location>
        <begin position="1085"/>
        <end position="1089"/>
    </location>
</feature>
<gene>
    <name type="primary">pol</name>
</gene>
<comment type="function">
    <molecule>Capsid protein C</molecule>
    <text evidence="5">Plays a role in virus budding by binding to the cell membrane and gathering the viral RNA into a nucleocapsid that forms the core of a mature virus particle. During virus entry, may induce genome penetration into the host cytoplasm after hemifusion induced by the surface proteins. Can migrate to the cell nucleus where it modulates host functions. Overcomes the anti-viral effects of host EXOC1 by sequestering and degrading the latter through the proteasome degradation pathway.</text>
</comment>
<comment type="function">
    <molecule>Capsid protein C</molecule>
    <text evidence="1">Inhibits RNA silencing by interfering with host Dicer.</text>
</comment>
<comment type="function">
    <molecule>Peptide pr</molecule>
    <text evidence="5">Prevents premature fusion activity of envelope proteins in trans-Golgi by binding to envelope protein E at pH6.0. After virion release in extracellular space, gets dissociated from E dimers.</text>
</comment>
<comment type="function">
    <molecule>Protein prM</molecule>
    <text evidence="5">Acts as a chaperone for envelope protein E during intracellular virion assembly by masking and inactivating envelope protein E fusion peptide. prM is the only viral peptide matured by host furin in the trans-Golgi network probably to avoid catastrophic activation of the viral fusion activity in acidic Golgi compartment prior to virion release. prM-E cleavage is inefficient, and many virions are only partially matured. These uncleaved prM would play a role in immune evasion.</text>
</comment>
<comment type="function">
    <molecule>Small envelope protein M</molecule>
    <text evidence="5">May play a role in virus budding. Exerts cytotoxic effects by activating a mitochondrial apoptotic pathway through M ectodomain. May display a viroporin activity.</text>
</comment>
<comment type="function">
    <molecule>Envelope protein E</molecule>
    <text evidence="5">Binds to host cell surface receptor and mediates fusion between viral and cellular membranes. Envelope protein is synthesized in the endoplasmic reticulum in the form of heterodimer with protein prM. They play a role in virion budding in the ER, and the newly formed immature particle is covered with 60 spikes composed of heterodimer between precursor prM and envelope protein E. The virion is transported to the Golgi apparatus where the low pH causes dissociation of PrM-E heterodimers and formation of E homodimers. prM-E cleavage is inefficient, and many virions are only partially matured. These uncleaved prM would play a role in immune evasion.</text>
</comment>
<comment type="function">
    <molecule>Non-structural protein 1</molecule>
    <text evidence="10">Involved in immune evasion, pathogenesis and viral replication. Once cleaved off the polyprotein, is targeted to three destinations: the viral replication cycle, the plasma membrane and the extracellular compartment. Essential for viral replication. Required for formation of the replication complex and recruitment of other non-structural proteins to the ER-derived membrane structures. Excreted as a hexameric lipoparticle that plays a role against host immune response. Antagonizing the complement function. Binds to the host macrophages and dendritic cells. Inhibits signal transduction originating from Toll-like receptor 3 (TLR3).</text>
</comment>
<comment type="function">
    <molecule>Non-structural protein 1</molecule>
    <text evidence="5">Disrupts the host endothelial glycocalyx layer of host pulmonary microvascular endothelial cells, inducing degradation of sialic acid and shedding of heparan sulfate proteoglycans. NS1 induces expression of sialidases, heparanase, and activates cathepsin L, which activates heparanase via enzymatic cleavage. These effects are probably linked to the endothelial hyperpermeability observed in severe dengue disease.</text>
</comment>
<comment type="function">
    <molecule>Non-structural protein 2A</molecule>
    <text evidence="5">Component of the viral RNA replication complex that functions in virion assembly and antagonizes the host immune response.</text>
</comment>
<comment type="function">
    <molecule>Serine protease subunit NS2B</molecule>
    <text evidence="5 16">Required cofactor for the serine protease function of NS3. May have membrane-destabilizing activity and form viroporins (By similarity).</text>
</comment>
<comment type="function">
    <molecule>Serine protease NS3</molecule>
    <text evidence="17">Displays three enzymatic activities: serine protease, NTPase and RNA helicase. NS3 serine protease, in association with NS2B, performs its autocleavage and cleaves the polyprotein at dibasic sites in the cytoplasm: C-prM, NS2A-NS2B, NS2B-NS3, NS3-NS4A, NS4A-2K and NS4B-NS5. NS3 RNA helicase binds RNA and unwinds dsRNA in the 3' to 5' direction.</text>
</comment>
<comment type="function">
    <molecule>Non-structural protein 4A</molecule>
    <text evidence="5 7 10">Regulates the ATPase activity of the NS3 helicase activity. NS4A allows NS3 helicase to conserve energy during unwinding. Plays a role in the inhibition of the host innate immune response. Interacts with host MAVS and thereby prevents the interaction between RIGI and MAVS. In turn, IFN-beta production is impaired. Interacts with host AUP1 which mediates induction of lipophagy in host cells and facilitates production of virus progeny particles (By similarity).</text>
</comment>
<comment type="function">
    <molecule>Peptide 2k</molecule>
    <text evidence="5">Functions as a signal peptide for NS4B and is required for the interferon antagonism activity of the latter.</text>
</comment>
<comment type="function">
    <molecule>Non-structural protein 4B</molecule>
    <text evidence="10">Induces the formation of ER-derived membrane vesicles where the viral replication takes place. Inhibits interferon (IFN)-induced host STAT1 phosphorylation and nuclear translocation, thereby preventing the establishment of cellular antiviral state by blocking the IFN-alpha/beta pathway.</text>
</comment>
<comment type="function">
    <molecule>RNA-directed RNA polymerase NS5</molecule>
    <text evidence="5">Replicates the viral (+) and (-) RNA genome, and performs the capping of genomes in the cytoplasm. NS5 methylates viral RNA cap at guanine N-7 and ribose 2'-O positions. Besides its role in RNA genome replication, also prevents the establishment of cellular antiviral state by blocking the interferon-alpha/beta (IFN-alpha/beta) signaling pathway. Inhibits host TYK2 and STAT2 phosphorylation, thereby preventing activation of JAK-STAT signaling pathway.</text>
</comment>
<comment type="catalytic activity">
    <reaction>
        <text>Selective hydrolysis of -Xaa-Xaa-|-Yaa- bonds in which each of the Xaa can be either Arg or Lys and Yaa can be either Ser or Ala.</text>
        <dbReference type="EC" id="3.4.21.91"/>
    </reaction>
</comment>
<comment type="catalytic activity">
    <reaction evidence="13">
        <text>RNA(n) + a ribonucleoside 5'-triphosphate = RNA(n+1) + diphosphate</text>
        <dbReference type="Rhea" id="RHEA:21248"/>
        <dbReference type="Rhea" id="RHEA-COMP:14527"/>
        <dbReference type="Rhea" id="RHEA-COMP:17342"/>
        <dbReference type="ChEBI" id="CHEBI:33019"/>
        <dbReference type="ChEBI" id="CHEBI:61557"/>
        <dbReference type="ChEBI" id="CHEBI:140395"/>
        <dbReference type="EC" id="2.7.7.48"/>
    </reaction>
</comment>
<comment type="catalytic activity">
    <reaction>
        <text>a ribonucleoside 5'-triphosphate + H2O = a ribonucleoside 5'-diphosphate + phosphate + H(+)</text>
        <dbReference type="Rhea" id="RHEA:23680"/>
        <dbReference type="ChEBI" id="CHEBI:15377"/>
        <dbReference type="ChEBI" id="CHEBI:15378"/>
        <dbReference type="ChEBI" id="CHEBI:43474"/>
        <dbReference type="ChEBI" id="CHEBI:57930"/>
        <dbReference type="ChEBI" id="CHEBI:61557"/>
        <dbReference type="EC" id="3.6.1.15"/>
    </reaction>
</comment>
<comment type="catalytic activity">
    <reaction>
        <text>ATP + H2O = ADP + phosphate + H(+)</text>
        <dbReference type="Rhea" id="RHEA:13065"/>
        <dbReference type="ChEBI" id="CHEBI:15377"/>
        <dbReference type="ChEBI" id="CHEBI:15378"/>
        <dbReference type="ChEBI" id="CHEBI:30616"/>
        <dbReference type="ChEBI" id="CHEBI:43474"/>
        <dbReference type="ChEBI" id="CHEBI:456216"/>
        <dbReference type="EC" id="3.6.4.13"/>
    </reaction>
</comment>
<comment type="catalytic activity">
    <reaction evidence="18">
        <text>a 5'-end (5'-triphosphoguanosine)-ribonucleoside in mRNA + S-adenosyl-L-methionine = a 5'-end (N(7)-methyl 5'-triphosphoguanosine)-ribonucleoside in mRNA + S-adenosyl-L-homocysteine</text>
        <dbReference type="Rhea" id="RHEA:67008"/>
        <dbReference type="Rhea" id="RHEA-COMP:17166"/>
        <dbReference type="Rhea" id="RHEA-COMP:17167"/>
        <dbReference type="ChEBI" id="CHEBI:57856"/>
        <dbReference type="ChEBI" id="CHEBI:59789"/>
        <dbReference type="ChEBI" id="CHEBI:156461"/>
        <dbReference type="ChEBI" id="CHEBI:167617"/>
        <dbReference type="EC" id="2.1.1.56"/>
    </reaction>
</comment>
<comment type="catalytic activity">
    <reaction evidence="18">
        <text>a 5'-end (N(7)-methyl 5'-triphosphoguanosine)-ribonucleoside in mRNA + S-adenosyl-L-methionine = a 5'-end (N(7)-methyl 5'-triphosphoguanosine)-(2'-O-methyl-ribonucleoside) in mRNA + S-adenosyl-L-homocysteine + H(+)</text>
        <dbReference type="Rhea" id="RHEA:67020"/>
        <dbReference type="Rhea" id="RHEA-COMP:17167"/>
        <dbReference type="Rhea" id="RHEA-COMP:17168"/>
        <dbReference type="ChEBI" id="CHEBI:15378"/>
        <dbReference type="ChEBI" id="CHEBI:57856"/>
        <dbReference type="ChEBI" id="CHEBI:59789"/>
        <dbReference type="ChEBI" id="CHEBI:156461"/>
        <dbReference type="ChEBI" id="CHEBI:167609"/>
        <dbReference type="EC" id="2.1.1.57"/>
    </reaction>
</comment>
<comment type="subunit">
    <molecule>Capsid protein C</molecule>
    <text evidence="5">Homodimer. Interacts (via N-terminus) with host EXOC1 (via C-terminus); this interaction results in EXOC1 degradation through the proteasome degradation pathway.</text>
</comment>
<comment type="subunit">
    <molecule>Protein prM</molecule>
    <text evidence="5">Forms heterodimers with envelope protein E in the endoplasmic reticulum and Golgi.</text>
</comment>
<comment type="subunit">
    <molecule>Envelope protein E</molecule>
    <text evidence="5">Homodimer; in the endoplasmic reticulum and Golgi. Interacts with protein prM. Interacts with non-structural protein 1.</text>
</comment>
<comment type="subunit">
    <molecule>Non-structural protein 1</molecule>
    <text evidence="5">Homodimer; Homohexamer when secreted. Interacts with envelope protein E.</text>
</comment>
<comment type="subunit">
    <molecule>Non-structural protein 2A</molecule>
    <text evidence="5">Interacts (via N-terminus) with serine protease NS3.</text>
</comment>
<comment type="subunit">
    <molecule>Serine protease subunit NS2B</molecule>
    <text evidence="5">Forms a heterodimer with serine protease NS3. May form homooligomers.</text>
</comment>
<comment type="subunit">
    <molecule>Serine protease NS3</molecule>
    <text evidence="5">Forms a heterodimer with NS2B. Interacts with NS4B. Interacts with unphosphorylated RNA-directed RNA polymerase NS5; this interaction stimulates RNA-directed RNA polymerase NS5 guanylyltransferase activity.</text>
</comment>
<comment type="subunit">
    <molecule>Non-structural protein 4A</molecule>
    <text evidence="5 7">Interacts with host MAVS; this interaction inhibits the synthesis of IFN-beta. Interacts with host AUP1; the interaction occurs in the presence of Dengue virus NS4B and induces lipophagy which facilitates production of virus progeny particles (By similarity).</text>
</comment>
<comment type="subunit">
    <molecule>Non-structural protein 4B</molecule>
    <text evidence="5">Interacts with serine protease NS3.</text>
</comment>
<comment type="subunit">
    <molecule>RNA-directed RNA polymerase NS5</molecule>
    <text evidence="5">Homodimer. Interacts with host STAT2; this interaction inhibits the phosphorylation of the latter, and, when all viral proteins are present (polyprotein), targets STAT2 for degradation. Interacts with serine protease NS3.</text>
</comment>
<comment type="subcellular location">
    <molecule>Capsid protein C</molecule>
    <subcellularLocation>
        <location evidence="5">Virion</location>
    </subcellularLocation>
    <subcellularLocation>
        <location evidence="5">Host nucleus</location>
    </subcellularLocation>
    <subcellularLocation>
        <location evidence="5">Host cytoplasm</location>
    </subcellularLocation>
    <subcellularLocation>
        <location evidence="5">Host cytoplasm</location>
        <location evidence="5">Host perinuclear region</location>
    </subcellularLocation>
</comment>
<comment type="subcellular location">
    <molecule>Peptide pr</molecule>
    <subcellularLocation>
        <location evidence="5">Secreted</location>
    </subcellularLocation>
</comment>
<comment type="subcellular location">
    <molecule>Small envelope protein M</molecule>
    <subcellularLocation>
        <location evidence="5">Virion membrane</location>
        <topology evidence="11">Multi-pass membrane protein</topology>
    </subcellularLocation>
    <subcellularLocation>
        <location evidence="5">Host endoplasmic reticulum membrane</location>
        <topology evidence="11">Multi-pass membrane protein</topology>
    </subcellularLocation>
</comment>
<comment type="subcellular location">
    <molecule>Envelope protein E</molecule>
    <subcellularLocation>
        <location evidence="5">Virion membrane</location>
        <topology evidence="11">Multi-pass membrane protein</topology>
    </subcellularLocation>
    <subcellularLocation>
        <location evidence="5">Host endoplasmic reticulum membrane</location>
        <topology evidence="11">Multi-pass membrane protein</topology>
    </subcellularLocation>
</comment>
<comment type="subcellular location">
    <molecule>Non-structural protein 1</molecule>
    <subcellularLocation>
        <location evidence="5">Secreted</location>
    </subcellularLocation>
    <subcellularLocation>
        <location>Host endoplasmic reticulum membrane</location>
        <topology>Peripheral membrane protein</topology>
        <orientation evidence="5">Lumenal side</orientation>
    </subcellularLocation>
    <text evidence="10">Located in RE-derived vesicles hosting the replication complex.</text>
</comment>
<comment type="subcellular location">
    <molecule>Non-structural protein 2A</molecule>
    <subcellularLocation>
        <location evidence="5">Host endoplasmic reticulum membrane</location>
        <topology evidence="5">Multi-pass membrane protein</topology>
    </subcellularLocation>
</comment>
<comment type="subcellular location">
    <molecule>Serine protease subunit NS2B</molecule>
    <subcellularLocation>
        <location>Host endoplasmic reticulum membrane</location>
        <topology evidence="5">Multi-pass membrane protein</topology>
    </subcellularLocation>
</comment>
<comment type="subcellular location">
    <molecule>Serine protease NS3</molecule>
    <subcellularLocation>
        <location evidence="17">Host endoplasmic reticulum membrane</location>
        <topology evidence="17">Peripheral membrane protein</topology>
        <orientation evidence="17">Cytoplasmic side</orientation>
    </subcellularLocation>
    <text evidence="17">Remains non-covalently associated to serine protease subunit NS2B.</text>
</comment>
<comment type="subcellular location">
    <molecule>Non-structural protein 4A</molecule>
    <subcellularLocation>
        <location evidence="5">Host endoplasmic reticulum membrane</location>
        <topology evidence="5">Multi-pass membrane protein</topology>
    </subcellularLocation>
    <subcellularLocation>
        <location evidence="5">Host mitochondrion</location>
    </subcellularLocation>
    <text evidence="5">Located in RE-associated vesicles hosting the replication complex. Interacts with host MAVS in the mitochondrion-associated endoplasmic reticulum membranes.</text>
</comment>
<comment type="subcellular location">
    <molecule>Non-structural protein 4B</molecule>
    <subcellularLocation>
        <location evidence="5">Host endoplasmic reticulum membrane</location>
        <topology evidence="5">Multi-pass membrane protein</topology>
    </subcellularLocation>
    <text evidence="10">Located in RE-derived vesicles hosting the replication complex.</text>
</comment>
<comment type="subcellular location">
    <molecule>RNA-directed RNA polymerase NS5</molecule>
    <subcellularLocation>
        <location>Host endoplasmic reticulum membrane</location>
        <topology>Peripheral membrane protein</topology>
        <orientation>Cytoplasmic side</orientation>
    </subcellularLocation>
    <subcellularLocation>
        <location evidence="5">Host nucleus</location>
    </subcellularLocation>
    <text evidence="5">Located in RE-associated vesicles hosting the replication complex. NS5 protein is mainly localized in the nucleus rather than in ER vesicles, especially in the DENV 2, 3, 4 serotypes.</text>
</comment>
<comment type="domain">
    <text evidence="5">The transmembrane domains of the small envelope protein M and envelope protein E contain an endoplasmic reticulum retention signal.</text>
</comment>
<comment type="PTM">
    <molecule>Genome polyprotein</molecule>
    <text evidence="5">Specific enzymatic cleavages in vivo yield mature proteins. Cleavages in the lumen of endoplasmic reticulum are performed by host signal peptidase, whereas cleavages in the cytoplasmic side are performed by serine protease NS3. Signal cleavage at the 2K-4B site requires a prior NS3 protease-mediated cleavage at the 4A-2K site.</text>
</comment>
<comment type="PTM">
    <molecule>Protein prM</molecule>
    <text evidence="5">Cleaved in post-Golgi vesicles by a host furin, releasing the mature small envelope protein M, and peptide pr. This cleavage is incomplete as up to 30% of viral particles still carry uncleaved prM.</text>
</comment>
<comment type="PTM">
    <molecule>Envelope protein E</molecule>
    <text evidence="5">N-glycosylated.</text>
</comment>
<comment type="PTM">
    <molecule>Non-structural protein 1</molecule>
    <text evidence="5">N-glycosylated. The excreted form is glycosylated and this is required for efficient secretion of the protein from infected cells.</text>
</comment>
<comment type="PTM">
    <molecule>Serine protease NS3</molecule>
    <text evidence="8">Acetylated by host KAT5. Acetylation modulates NS3 RNA-binding and unwinding activities and plays an important positive role for viral replication.</text>
</comment>
<comment type="PTM">
    <molecule>RNA-directed RNA polymerase NS5</molecule>
    <text evidence="6">Sumoylation of RNA-directed RNA polymerase NS5 increases NS5 protein stability allowing proper viral RNA replication.</text>
</comment>
<comment type="PTM">
    <molecule>RNA-directed RNA polymerase NS5</molecule>
    <text evidence="5">Phosphorylated on serines residues. This phosphorylation may trigger NS5 nuclear localization.</text>
</comment>
<comment type="similarity">
    <text evidence="18">In the N-terminal section; belongs to the class I-like SAM-binding methyltransferase superfamily. mRNA cap 0-1 NS5-type methyltransferase family.</text>
</comment>
<dbReference type="EC" id="3.4.21.91"/>
<dbReference type="EC" id="3.6.1.15" evidence="10"/>
<dbReference type="EC" id="3.6.4.13" evidence="10"/>
<dbReference type="EC" id="2.1.1.56" evidence="18"/>
<dbReference type="EC" id="2.1.1.57" evidence="18"/>
<dbReference type="EC" id="2.7.7.48" evidence="13"/>
<dbReference type="EMBL" id="AY099337">
    <property type="protein sequence ID" value="AAM51538.1"/>
    <property type="molecule type" value="Genomic_RNA"/>
</dbReference>
<dbReference type="SMR" id="Q6YMS3"/>
<dbReference type="MEROPS" id="S07.001"/>
<dbReference type="GlyCosmos" id="Q6YMS3">
    <property type="glycosylation" value="10 sites, No reported glycans"/>
</dbReference>
<dbReference type="BRENDA" id="3.4.21.91">
    <property type="organism ID" value="9648"/>
</dbReference>
<dbReference type="PRO" id="PR:Q6YMS3"/>
<dbReference type="Proteomes" id="UP000007199">
    <property type="component" value="Genome"/>
</dbReference>
<dbReference type="GO" id="GO:0005576">
    <property type="term" value="C:extracellular region"/>
    <property type="evidence" value="ECO:0007669"/>
    <property type="project" value="UniProtKB-SubCell"/>
</dbReference>
<dbReference type="GO" id="GO:0044167">
    <property type="term" value="C:host cell endoplasmic reticulum membrane"/>
    <property type="evidence" value="ECO:0007669"/>
    <property type="project" value="UniProtKB-SubCell"/>
</dbReference>
<dbReference type="GO" id="GO:0033650">
    <property type="term" value="C:host cell mitochondrion"/>
    <property type="evidence" value="ECO:0007669"/>
    <property type="project" value="UniProtKB-SubCell"/>
</dbReference>
<dbReference type="GO" id="GO:0042025">
    <property type="term" value="C:host cell nucleus"/>
    <property type="evidence" value="ECO:0007669"/>
    <property type="project" value="UniProtKB-SubCell"/>
</dbReference>
<dbReference type="GO" id="GO:0044220">
    <property type="term" value="C:host cell perinuclear region of cytoplasm"/>
    <property type="evidence" value="ECO:0007669"/>
    <property type="project" value="UniProtKB-SubCell"/>
</dbReference>
<dbReference type="GO" id="GO:0016020">
    <property type="term" value="C:membrane"/>
    <property type="evidence" value="ECO:0007669"/>
    <property type="project" value="UniProtKB-KW"/>
</dbReference>
<dbReference type="GO" id="GO:0019028">
    <property type="term" value="C:viral capsid"/>
    <property type="evidence" value="ECO:0007669"/>
    <property type="project" value="UniProtKB-KW"/>
</dbReference>
<dbReference type="GO" id="GO:0019031">
    <property type="term" value="C:viral envelope"/>
    <property type="evidence" value="ECO:0007669"/>
    <property type="project" value="UniProtKB-KW"/>
</dbReference>
<dbReference type="GO" id="GO:0055036">
    <property type="term" value="C:virion membrane"/>
    <property type="evidence" value="ECO:0007669"/>
    <property type="project" value="UniProtKB-SubCell"/>
</dbReference>
<dbReference type="GO" id="GO:0005524">
    <property type="term" value="F:ATP binding"/>
    <property type="evidence" value="ECO:0007669"/>
    <property type="project" value="UniProtKB-KW"/>
</dbReference>
<dbReference type="GO" id="GO:0016887">
    <property type="term" value="F:ATP hydrolysis activity"/>
    <property type="evidence" value="ECO:0007669"/>
    <property type="project" value="RHEA"/>
</dbReference>
<dbReference type="GO" id="GO:0015267">
    <property type="term" value="F:channel activity"/>
    <property type="evidence" value="ECO:0007669"/>
    <property type="project" value="UniProtKB-KW"/>
</dbReference>
<dbReference type="GO" id="GO:0003725">
    <property type="term" value="F:double-stranded RNA binding"/>
    <property type="evidence" value="ECO:0007669"/>
    <property type="project" value="InterPro"/>
</dbReference>
<dbReference type="GO" id="GO:0046872">
    <property type="term" value="F:metal ion binding"/>
    <property type="evidence" value="ECO:0007669"/>
    <property type="project" value="UniProtKB-KW"/>
</dbReference>
<dbReference type="GO" id="GO:0004483">
    <property type="term" value="F:mRNA (nucleoside-2'-O-)-methyltransferase activity"/>
    <property type="evidence" value="ECO:0007669"/>
    <property type="project" value="UniProtKB-EC"/>
</dbReference>
<dbReference type="GO" id="GO:0004482">
    <property type="term" value="F:mRNA 5'-cap (guanine-N7-)-methyltransferase activity"/>
    <property type="evidence" value="ECO:0007669"/>
    <property type="project" value="UniProtKB-EC"/>
</dbReference>
<dbReference type="GO" id="GO:0046983">
    <property type="term" value="F:protein dimerization activity"/>
    <property type="evidence" value="ECO:0007669"/>
    <property type="project" value="InterPro"/>
</dbReference>
<dbReference type="GO" id="GO:0003724">
    <property type="term" value="F:RNA helicase activity"/>
    <property type="evidence" value="ECO:0007669"/>
    <property type="project" value="UniProtKB-EC"/>
</dbReference>
<dbReference type="GO" id="GO:0003968">
    <property type="term" value="F:RNA-directed RNA polymerase activity"/>
    <property type="evidence" value="ECO:0007669"/>
    <property type="project" value="UniProtKB-KW"/>
</dbReference>
<dbReference type="GO" id="GO:0004252">
    <property type="term" value="F:serine-type endopeptidase activity"/>
    <property type="evidence" value="ECO:0007669"/>
    <property type="project" value="InterPro"/>
</dbReference>
<dbReference type="GO" id="GO:0005198">
    <property type="term" value="F:structural molecule activity"/>
    <property type="evidence" value="ECO:0007669"/>
    <property type="project" value="InterPro"/>
</dbReference>
<dbReference type="GO" id="GO:0075512">
    <property type="term" value="P:clathrin-dependent endocytosis of virus by host cell"/>
    <property type="evidence" value="ECO:0007669"/>
    <property type="project" value="UniProtKB-KW"/>
</dbReference>
<dbReference type="GO" id="GO:0039654">
    <property type="term" value="P:fusion of virus membrane with host endosome membrane"/>
    <property type="evidence" value="ECO:0007669"/>
    <property type="project" value="UniProtKB-KW"/>
</dbReference>
<dbReference type="GO" id="GO:0034220">
    <property type="term" value="P:monoatomic ion transmembrane transport"/>
    <property type="evidence" value="ECO:0007669"/>
    <property type="project" value="UniProtKB-KW"/>
</dbReference>
<dbReference type="GO" id="GO:0006508">
    <property type="term" value="P:proteolysis"/>
    <property type="evidence" value="ECO:0007669"/>
    <property type="project" value="UniProtKB-KW"/>
</dbReference>
<dbReference type="GO" id="GO:0039520">
    <property type="term" value="P:symbiont-mediated activation of host autophagy"/>
    <property type="evidence" value="ECO:0007669"/>
    <property type="project" value="UniProtKB-KW"/>
</dbReference>
<dbReference type="GO" id="GO:0039545">
    <property type="term" value="P:symbiont-mediated suppression of host cytoplasmic pattern recognition receptor signaling pathway via inhibition of MAVS activity"/>
    <property type="evidence" value="ECO:0007669"/>
    <property type="project" value="UniProtKB-KW"/>
</dbReference>
<dbReference type="GO" id="GO:0039574">
    <property type="term" value="P:symbiont-mediated suppression of host JAK-STAT cascade via inhibition of host TYK2 activity"/>
    <property type="evidence" value="ECO:0007669"/>
    <property type="project" value="UniProtKB-KW"/>
</dbReference>
<dbReference type="GO" id="GO:0039564">
    <property type="term" value="P:symbiont-mediated suppression of host JAK-STAT cascade via inhibition of STAT2 activity"/>
    <property type="evidence" value="ECO:0007669"/>
    <property type="project" value="UniProtKB-KW"/>
</dbReference>
<dbReference type="GO" id="GO:0039502">
    <property type="term" value="P:symbiont-mediated suppression of host type I interferon-mediated signaling pathway"/>
    <property type="evidence" value="ECO:0007669"/>
    <property type="project" value="UniProtKB-KW"/>
</dbReference>
<dbReference type="GO" id="GO:0039694">
    <property type="term" value="P:viral RNA genome replication"/>
    <property type="evidence" value="ECO:0007669"/>
    <property type="project" value="InterPro"/>
</dbReference>
<dbReference type="GO" id="GO:0019062">
    <property type="term" value="P:virion attachment to host cell"/>
    <property type="evidence" value="ECO:0007669"/>
    <property type="project" value="UniProtKB-KW"/>
</dbReference>
<dbReference type="CDD" id="cd20761">
    <property type="entry name" value="capping_2-OMTase_Flaviviridae"/>
    <property type="match status" value="1"/>
</dbReference>
<dbReference type="CDD" id="cd17931">
    <property type="entry name" value="DEXHc_viral_Ns3"/>
    <property type="match status" value="1"/>
</dbReference>
<dbReference type="CDD" id="cd12149">
    <property type="entry name" value="Flavi_E_C"/>
    <property type="match status" value="1"/>
</dbReference>
<dbReference type="CDD" id="cd17038">
    <property type="entry name" value="Flavi_M"/>
    <property type="match status" value="1"/>
</dbReference>
<dbReference type="CDD" id="cd23204">
    <property type="entry name" value="Flavivirus_RdRp"/>
    <property type="match status" value="1"/>
</dbReference>
<dbReference type="CDD" id="cd18806">
    <property type="entry name" value="SF2_C_viral"/>
    <property type="match status" value="1"/>
</dbReference>
<dbReference type="FunFam" id="1.20.1280.260:FF:000001">
    <property type="entry name" value="Envelope glycoprotein"/>
    <property type="match status" value="1"/>
</dbReference>
<dbReference type="FunFam" id="2.60.40.350:FF:000001">
    <property type="entry name" value="Envelope glycoprotein"/>
    <property type="match status" value="1"/>
</dbReference>
<dbReference type="FunFam" id="1.10.10.930:FF:000001">
    <property type="entry name" value="Genome polyprotein"/>
    <property type="match status" value="1"/>
</dbReference>
<dbReference type="FunFam" id="2.60.260.50:FF:000001">
    <property type="entry name" value="Genome polyprotein"/>
    <property type="match status" value="1"/>
</dbReference>
<dbReference type="FunFam" id="3.30.70.2840:FF:000001">
    <property type="entry name" value="Genome polyprotein"/>
    <property type="match status" value="1"/>
</dbReference>
<dbReference type="FunFam" id="3.30.70.2840:FF:000002">
    <property type="entry name" value="Genome polyprotein"/>
    <property type="match status" value="1"/>
</dbReference>
<dbReference type="FunFam" id="3.40.50.150:FF:000105">
    <property type="entry name" value="Genome polyprotein"/>
    <property type="match status" value="1"/>
</dbReference>
<dbReference type="FunFam" id="3.40.50.300:FF:000763">
    <property type="entry name" value="Genome polyprotein"/>
    <property type="match status" value="1"/>
</dbReference>
<dbReference type="Gene3D" id="1.10.10.930">
    <property type="match status" value="1"/>
</dbReference>
<dbReference type="Gene3D" id="1.10.260.90">
    <property type="match status" value="1"/>
</dbReference>
<dbReference type="Gene3D" id="1.20.1280.260">
    <property type="match status" value="1"/>
</dbReference>
<dbReference type="Gene3D" id="2.40.10.120">
    <property type="match status" value="2"/>
</dbReference>
<dbReference type="Gene3D" id="2.60.40.350">
    <property type="match status" value="1"/>
</dbReference>
<dbReference type="Gene3D" id="1.10.8.970">
    <property type="entry name" value="Flavivirus envelope glycoprotein M-like"/>
    <property type="match status" value="1"/>
</dbReference>
<dbReference type="Gene3D" id="2.60.260.50">
    <property type="entry name" value="Flavivirus polyprotein propeptide domain"/>
    <property type="match status" value="1"/>
</dbReference>
<dbReference type="Gene3D" id="3.30.70.2840">
    <property type="entry name" value="Flavivirus RNA-directed RNA polymerase, thumb domain"/>
    <property type="match status" value="3"/>
</dbReference>
<dbReference type="Gene3D" id="3.40.50.300">
    <property type="entry name" value="P-loop containing nucleotide triphosphate hydrolases"/>
    <property type="match status" value="2"/>
</dbReference>
<dbReference type="Gene3D" id="2.60.98.10">
    <property type="entry name" value="Tick-borne Encephalitis virus Glycoprotein, domain 1"/>
    <property type="match status" value="1"/>
</dbReference>
<dbReference type="Gene3D" id="2.40.10.10">
    <property type="entry name" value="Trypsin-like serine proteases"/>
    <property type="match status" value="1"/>
</dbReference>
<dbReference type="Gene3D" id="3.40.50.150">
    <property type="entry name" value="Vaccinia Virus protein VP39"/>
    <property type="match status" value="1"/>
</dbReference>
<dbReference type="Gene3D" id="3.30.67.10">
    <property type="entry name" value="Viral Envelope Glycoprotein, domain 2"/>
    <property type="match status" value="1"/>
</dbReference>
<dbReference type="Gene3D" id="3.30.387.10">
    <property type="entry name" value="Viral Envelope Glycoprotein, domain 3"/>
    <property type="match status" value="1"/>
</dbReference>
<dbReference type="InterPro" id="IPR043502">
    <property type="entry name" value="DNA/RNA_pol_sf"/>
</dbReference>
<dbReference type="InterPro" id="IPR000069">
    <property type="entry name" value="Env_glycoprot_M_flavivir"/>
</dbReference>
<dbReference type="InterPro" id="IPR038302">
    <property type="entry name" value="Env_glycoprot_M_sf_flavivir"/>
</dbReference>
<dbReference type="InterPro" id="IPR013755">
    <property type="entry name" value="Flav_gly_cen_dom_subdom1"/>
</dbReference>
<dbReference type="InterPro" id="IPR001122">
    <property type="entry name" value="Flavi_capsidC"/>
</dbReference>
<dbReference type="InterPro" id="IPR037172">
    <property type="entry name" value="Flavi_capsidC_sf"/>
</dbReference>
<dbReference type="InterPro" id="IPR011492">
    <property type="entry name" value="Flavi_DEAD"/>
</dbReference>
<dbReference type="InterPro" id="IPR027287">
    <property type="entry name" value="Flavi_E_Ig-like"/>
</dbReference>
<dbReference type="InterPro" id="IPR026470">
    <property type="entry name" value="Flavi_E_Stem/Anchor_dom"/>
</dbReference>
<dbReference type="InterPro" id="IPR038345">
    <property type="entry name" value="Flavi_E_Stem/Anchor_dom_sf"/>
</dbReference>
<dbReference type="InterPro" id="IPR011998">
    <property type="entry name" value="Flavi_Glycoprot_E_cen/dimer"/>
</dbReference>
<dbReference type="InterPro" id="IPR001157">
    <property type="entry name" value="Flavi_NS1"/>
</dbReference>
<dbReference type="InterPro" id="IPR000752">
    <property type="entry name" value="Flavi_NS2A"/>
</dbReference>
<dbReference type="InterPro" id="IPR000487">
    <property type="entry name" value="Flavi_NS2B"/>
</dbReference>
<dbReference type="InterPro" id="IPR001850">
    <property type="entry name" value="Flavi_NS3_S7"/>
</dbReference>
<dbReference type="InterPro" id="IPR000404">
    <property type="entry name" value="Flavi_NS4A"/>
</dbReference>
<dbReference type="InterPro" id="IPR001528">
    <property type="entry name" value="Flavi_NS4B"/>
</dbReference>
<dbReference type="InterPro" id="IPR046811">
    <property type="entry name" value="Flavi_NS5_thumb"/>
</dbReference>
<dbReference type="InterPro" id="IPR002535">
    <property type="entry name" value="Flavi_propep"/>
</dbReference>
<dbReference type="InterPro" id="IPR038688">
    <property type="entry name" value="Flavi_propep_sf"/>
</dbReference>
<dbReference type="InterPro" id="IPR047530">
    <property type="entry name" value="Flavi_RdRp"/>
</dbReference>
<dbReference type="InterPro" id="IPR000208">
    <property type="entry name" value="Flavi_RdRp_fingers/palm"/>
</dbReference>
<dbReference type="InterPro" id="IPR000336">
    <property type="entry name" value="Flavivir/Alphavir_Ig-like_sf"/>
</dbReference>
<dbReference type="InterPro" id="IPR014412">
    <property type="entry name" value="Gen_Poly_FLV"/>
</dbReference>
<dbReference type="InterPro" id="IPR036253">
    <property type="entry name" value="Glycoprot_cen/dimer_sf"/>
</dbReference>
<dbReference type="InterPro" id="IPR038055">
    <property type="entry name" value="Glycoprot_E_dimer_dom"/>
</dbReference>
<dbReference type="InterPro" id="IPR013756">
    <property type="entry name" value="GlyE_cen_dom_subdom2"/>
</dbReference>
<dbReference type="InterPro" id="IPR014001">
    <property type="entry name" value="Helicase_ATP-bd"/>
</dbReference>
<dbReference type="InterPro" id="IPR001650">
    <property type="entry name" value="Helicase_C-like"/>
</dbReference>
<dbReference type="InterPro" id="IPR014756">
    <property type="entry name" value="Ig_E-set"/>
</dbReference>
<dbReference type="InterPro" id="IPR026490">
    <property type="entry name" value="mRNA_cap_0/1_MeTrfase"/>
</dbReference>
<dbReference type="InterPro" id="IPR049486">
    <property type="entry name" value="NS3-hel_C_flaviviridae"/>
</dbReference>
<dbReference type="InterPro" id="IPR027417">
    <property type="entry name" value="P-loop_NTPase"/>
</dbReference>
<dbReference type="InterPro" id="IPR009003">
    <property type="entry name" value="Peptidase_S1_PA"/>
</dbReference>
<dbReference type="InterPro" id="IPR043504">
    <property type="entry name" value="Peptidase_S1_PA_chymotrypsin"/>
</dbReference>
<dbReference type="InterPro" id="IPR007094">
    <property type="entry name" value="RNA-dir_pol_PSvirus"/>
</dbReference>
<dbReference type="InterPro" id="IPR002877">
    <property type="entry name" value="RNA_MeTrfase_FtsJ_dom"/>
</dbReference>
<dbReference type="InterPro" id="IPR029063">
    <property type="entry name" value="SAM-dependent_MTases_sf"/>
</dbReference>
<dbReference type="NCBIfam" id="TIGR04240">
    <property type="entry name" value="flavi_E_stem"/>
    <property type="match status" value="1"/>
</dbReference>
<dbReference type="Pfam" id="PF20907">
    <property type="entry name" value="Flav_NS3-hel_C"/>
    <property type="match status" value="1"/>
</dbReference>
<dbReference type="Pfam" id="PF01003">
    <property type="entry name" value="Flavi_capsid"/>
    <property type="match status" value="1"/>
</dbReference>
<dbReference type="Pfam" id="PF07652">
    <property type="entry name" value="Flavi_DEAD"/>
    <property type="match status" value="1"/>
</dbReference>
<dbReference type="Pfam" id="PF21659">
    <property type="entry name" value="Flavi_E_stem"/>
    <property type="match status" value="1"/>
</dbReference>
<dbReference type="Pfam" id="PF02832">
    <property type="entry name" value="Flavi_glycop_C"/>
    <property type="match status" value="1"/>
</dbReference>
<dbReference type="Pfam" id="PF00869">
    <property type="entry name" value="Flavi_glycoprot"/>
    <property type="match status" value="1"/>
</dbReference>
<dbReference type="Pfam" id="PF01004">
    <property type="entry name" value="Flavi_M"/>
    <property type="match status" value="1"/>
</dbReference>
<dbReference type="Pfam" id="PF00948">
    <property type="entry name" value="Flavi_NS1"/>
    <property type="match status" value="1"/>
</dbReference>
<dbReference type="Pfam" id="PF01005">
    <property type="entry name" value="Flavi_NS2A"/>
    <property type="match status" value="1"/>
</dbReference>
<dbReference type="Pfam" id="PF01002">
    <property type="entry name" value="Flavi_NS2B"/>
    <property type="match status" value="1"/>
</dbReference>
<dbReference type="Pfam" id="PF01350">
    <property type="entry name" value="Flavi_NS4A"/>
    <property type="match status" value="1"/>
</dbReference>
<dbReference type="Pfam" id="PF01349">
    <property type="entry name" value="Flavi_NS4B"/>
    <property type="match status" value="1"/>
</dbReference>
<dbReference type="Pfam" id="PF00972">
    <property type="entry name" value="Flavi_NS5"/>
    <property type="match status" value="1"/>
</dbReference>
<dbReference type="Pfam" id="PF20483">
    <property type="entry name" value="Flavi_NS5_thumb"/>
    <property type="match status" value="1"/>
</dbReference>
<dbReference type="Pfam" id="PF01570">
    <property type="entry name" value="Flavi_propep"/>
    <property type="match status" value="1"/>
</dbReference>
<dbReference type="Pfam" id="PF01728">
    <property type="entry name" value="FtsJ"/>
    <property type="match status" value="1"/>
</dbReference>
<dbReference type="Pfam" id="PF00949">
    <property type="entry name" value="Peptidase_S7"/>
    <property type="match status" value="1"/>
</dbReference>
<dbReference type="PIRSF" id="PIRSF003817">
    <property type="entry name" value="Gen_Poly_FLV"/>
    <property type="match status" value="1"/>
</dbReference>
<dbReference type="SMART" id="SM00487">
    <property type="entry name" value="DEXDc"/>
    <property type="match status" value="1"/>
</dbReference>
<dbReference type="SMART" id="SM00490">
    <property type="entry name" value="HELICc"/>
    <property type="match status" value="1"/>
</dbReference>
<dbReference type="SUPFAM" id="SSF56672">
    <property type="entry name" value="DNA/RNA polymerases"/>
    <property type="match status" value="1"/>
</dbReference>
<dbReference type="SUPFAM" id="SSF81296">
    <property type="entry name" value="E set domains"/>
    <property type="match status" value="1"/>
</dbReference>
<dbReference type="SUPFAM" id="SSF101257">
    <property type="entry name" value="Flavivirus capsid protein C"/>
    <property type="match status" value="1"/>
</dbReference>
<dbReference type="SUPFAM" id="SSF52540">
    <property type="entry name" value="P-loop containing nucleoside triphosphate hydrolases"/>
    <property type="match status" value="2"/>
</dbReference>
<dbReference type="SUPFAM" id="SSF53335">
    <property type="entry name" value="S-adenosyl-L-methionine-dependent methyltransferases"/>
    <property type="match status" value="1"/>
</dbReference>
<dbReference type="SUPFAM" id="SSF50494">
    <property type="entry name" value="Trypsin-like serine proteases"/>
    <property type="match status" value="1"/>
</dbReference>
<dbReference type="SUPFAM" id="SSF56983">
    <property type="entry name" value="Viral glycoprotein, central and dimerisation domains"/>
    <property type="match status" value="1"/>
</dbReference>
<dbReference type="PROSITE" id="PS51527">
    <property type="entry name" value="FLAVIVIRUS_NS2B"/>
    <property type="match status" value="1"/>
</dbReference>
<dbReference type="PROSITE" id="PS51528">
    <property type="entry name" value="FLAVIVIRUS_NS3PRO"/>
    <property type="match status" value="1"/>
</dbReference>
<dbReference type="PROSITE" id="PS51192">
    <property type="entry name" value="HELICASE_ATP_BIND_1"/>
    <property type="match status" value="1"/>
</dbReference>
<dbReference type="PROSITE" id="PS51194">
    <property type="entry name" value="HELICASE_CTER"/>
    <property type="match status" value="1"/>
</dbReference>
<dbReference type="PROSITE" id="PS50507">
    <property type="entry name" value="RDRP_SSRNA_POS"/>
    <property type="match status" value="1"/>
</dbReference>
<dbReference type="PROSITE" id="PS51591">
    <property type="entry name" value="RNA_CAP01_NS5_MT"/>
    <property type="match status" value="1"/>
</dbReference>